<keyword id="KW-0963">Cytoplasm</keyword>
<keyword id="KW-0460">Magnesium</keyword>
<keyword id="KW-0479">Metal-binding</keyword>
<keyword id="KW-0566">Pantothenate biosynthesis</keyword>
<keyword id="KW-1185">Reference proteome</keyword>
<keyword id="KW-0808">Transferase</keyword>
<organism>
    <name type="scientific">Chlorobaculum tepidum (strain ATCC 49652 / DSM 12025 / NBRC 103806 / TLS)</name>
    <name type="common">Chlorobium tepidum</name>
    <dbReference type="NCBI Taxonomy" id="194439"/>
    <lineage>
        <taxon>Bacteria</taxon>
        <taxon>Pseudomonadati</taxon>
        <taxon>Chlorobiota</taxon>
        <taxon>Chlorobiia</taxon>
        <taxon>Chlorobiales</taxon>
        <taxon>Chlorobiaceae</taxon>
        <taxon>Chlorobaculum</taxon>
    </lineage>
</organism>
<sequence length="277" mass="30608">MNQPSGNKLPHVTTRRMLDMKERGEKIAMLTAYDYTMARILDRSGVDAILVGDSASNVFAGHSTTLPMTVDEMIYHAKAVVRGVQAETRRAMVIVDMPFMSYQLSPEDAVRNAGKIMKEHECDAVKMEGGKVIAEAVKRITDIGIPVMGHLGLMPQSIYKYGSYKVRAMEEEEARQLIEDAKIIEEAGAFAIVLEKIPSKLAGEVSRLLTIPTIGIGAGPECDGQVLVINDMLGLSTDFRPRFVRRYADLSSVIEQAVKSYVEDVRSNSFPSEDESY</sequence>
<protein>
    <recommendedName>
        <fullName evidence="1">3-methyl-2-oxobutanoate hydroxymethyltransferase</fullName>
        <ecNumber evidence="1">2.1.2.11</ecNumber>
    </recommendedName>
    <alternativeName>
        <fullName evidence="1">Ketopantoate hydroxymethyltransferase</fullName>
        <shortName evidence="1">KPHMT</shortName>
    </alternativeName>
</protein>
<name>PANB_CHLTE</name>
<proteinExistence type="inferred from homology"/>
<accession>Q8KCS2</accession>
<gene>
    <name evidence="1" type="primary">panB</name>
    <name type="ordered locus">CT1341</name>
</gene>
<comment type="function">
    <text evidence="1">Catalyzes the reversible reaction in which hydroxymethyl group from 5,10-methylenetetrahydrofolate is transferred onto alpha-ketoisovalerate to form ketopantoate.</text>
</comment>
<comment type="catalytic activity">
    <reaction evidence="1">
        <text>3-methyl-2-oxobutanoate + (6R)-5,10-methylene-5,6,7,8-tetrahydrofolate + H2O = 2-dehydropantoate + (6S)-5,6,7,8-tetrahydrofolate</text>
        <dbReference type="Rhea" id="RHEA:11824"/>
        <dbReference type="ChEBI" id="CHEBI:11561"/>
        <dbReference type="ChEBI" id="CHEBI:11851"/>
        <dbReference type="ChEBI" id="CHEBI:15377"/>
        <dbReference type="ChEBI" id="CHEBI:15636"/>
        <dbReference type="ChEBI" id="CHEBI:57453"/>
        <dbReference type="EC" id="2.1.2.11"/>
    </reaction>
</comment>
<comment type="cofactor">
    <cofactor evidence="1">
        <name>Mg(2+)</name>
        <dbReference type="ChEBI" id="CHEBI:18420"/>
    </cofactor>
    <text evidence="1">Binds 1 Mg(2+) ion per subunit.</text>
</comment>
<comment type="pathway">
    <text evidence="1">Cofactor biosynthesis; (R)-pantothenate biosynthesis; (R)-pantoate from 3-methyl-2-oxobutanoate: step 1/2.</text>
</comment>
<comment type="subunit">
    <text evidence="1">Homodecamer; pentamer of dimers.</text>
</comment>
<comment type="subcellular location">
    <subcellularLocation>
        <location evidence="1">Cytoplasm</location>
    </subcellularLocation>
</comment>
<comment type="similarity">
    <text evidence="1">Belongs to the PanB family.</text>
</comment>
<feature type="chain" id="PRO_0000184834" description="3-methyl-2-oxobutanoate hydroxymethyltransferase">
    <location>
        <begin position="1"/>
        <end position="277"/>
    </location>
</feature>
<feature type="active site" description="Proton acceptor" evidence="1">
    <location>
        <position position="195"/>
    </location>
</feature>
<feature type="binding site" evidence="1">
    <location>
        <begin position="53"/>
        <end position="54"/>
    </location>
    <ligand>
        <name>3-methyl-2-oxobutanoate</name>
        <dbReference type="ChEBI" id="CHEBI:11851"/>
    </ligand>
</feature>
<feature type="binding site" evidence="1">
    <location>
        <position position="53"/>
    </location>
    <ligand>
        <name>Mg(2+)</name>
        <dbReference type="ChEBI" id="CHEBI:18420"/>
    </ligand>
</feature>
<feature type="binding site" evidence="1">
    <location>
        <position position="96"/>
    </location>
    <ligand>
        <name>3-methyl-2-oxobutanoate</name>
        <dbReference type="ChEBI" id="CHEBI:11851"/>
    </ligand>
</feature>
<feature type="binding site" evidence="1">
    <location>
        <position position="96"/>
    </location>
    <ligand>
        <name>Mg(2+)</name>
        <dbReference type="ChEBI" id="CHEBI:18420"/>
    </ligand>
</feature>
<feature type="binding site" evidence="1">
    <location>
        <position position="126"/>
    </location>
    <ligand>
        <name>3-methyl-2-oxobutanoate</name>
        <dbReference type="ChEBI" id="CHEBI:11851"/>
    </ligand>
</feature>
<feature type="binding site" evidence="1">
    <location>
        <position position="128"/>
    </location>
    <ligand>
        <name>Mg(2+)</name>
        <dbReference type="ChEBI" id="CHEBI:18420"/>
    </ligand>
</feature>
<reference key="1">
    <citation type="journal article" date="2002" name="Proc. Natl. Acad. Sci. U.S.A.">
        <title>The complete genome sequence of Chlorobium tepidum TLS, a photosynthetic, anaerobic, green-sulfur bacterium.</title>
        <authorList>
            <person name="Eisen J.A."/>
            <person name="Nelson K.E."/>
            <person name="Paulsen I.T."/>
            <person name="Heidelberg J.F."/>
            <person name="Wu M."/>
            <person name="Dodson R.J."/>
            <person name="DeBoy R.T."/>
            <person name="Gwinn M.L."/>
            <person name="Nelson W.C."/>
            <person name="Haft D.H."/>
            <person name="Hickey E.K."/>
            <person name="Peterson J.D."/>
            <person name="Durkin A.S."/>
            <person name="Kolonay J.F."/>
            <person name="Yang F."/>
            <person name="Holt I.E."/>
            <person name="Umayam L.A."/>
            <person name="Mason T.M."/>
            <person name="Brenner M."/>
            <person name="Shea T.P."/>
            <person name="Parksey D.S."/>
            <person name="Nierman W.C."/>
            <person name="Feldblyum T.V."/>
            <person name="Hansen C.L."/>
            <person name="Craven M.B."/>
            <person name="Radune D."/>
            <person name="Vamathevan J.J."/>
            <person name="Khouri H.M."/>
            <person name="White O."/>
            <person name="Gruber T.M."/>
            <person name="Ketchum K.A."/>
            <person name="Venter J.C."/>
            <person name="Tettelin H."/>
            <person name="Bryant D.A."/>
            <person name="Fraser C.M."/>
        </authorList>
    </citation>
    <scope>NUCLEOTIDE SEQUENCE [LARGE SCALE GENOMIC DNA]</scope>
    <source>
        <strain>ATCC 49652 / DSM 12025 / NBRC 103806 / TLS</strain>
    </source>
</reference>
<dbReference type="EC" id="2.1.2.11" evidence="1"/>
<dbReference type="EMBL" id="AE006470">
    <property type="protein sequence ID" value="AAM72570.1"/>
    <property type="molecule type" value="Genomic_DNA"/>
</dbReference>
<dbReference type="RefSeq" id="NP_662228.1">
    <property type="nucleotide sequence ID" value="NC_002932.3"/>
</dbReference>
<dbReference type="RefSeq" id="WP_010933009.1">
    <property type="nucleotide sequence ID" value="NC_002932.3"/>
</dbReference>
<dbReference type="SMR" id="Q8KCS2"/>
<dbReference type="STRING" id="194439.CT1341"/>
<dbReference type="EnsemblBacteria" id="AAM72570">
    <property type="protein sequence ID" value="AAM72570"/>
    <property type="gene ID" value="CT1341"/>
</dbReference>
<dbReference type="KEGG" id="cte:CT1341"/>
<dbReference type="PATRIC" id="fig|194439.7.peg.1221"/>
<dbReference type="eggNOG" id="COG0413">
    <property type="taxonomic scope" value="Bacteria"/>
</dbReference>
<dbReference type="HOGENOM" id="CLU_036645_1_0_10"/>
<dbReference type="OrthoDB" id="9781789at2"/>
<dbReference type="UniPathway" id="UPA00028">
    <property type="reaction ID" value="UER00003"/>
</dbReference>
<dbReference type="Proteomes" id="UP000001007">
    <property type="component" value="Chromosome"/>
</dbReference>
<dbReference type="GO" id="GO:0005737">
    <property type="term" value="C:cytoplasm"/>
    <property type="evidence" value="ECO:0007669"/>
    <property type="project" value="UniProtKB-SubCell"/>
</dbReference>
<dbReference type="GO" id="GO:0003864">
    <property type="term" value="F:3-methyl-2-oxobutanoate hydroxymethyltransferase activity"/>
    <property type="evidence" value="ECO:0007669"/>
    <property type="project" value="UniProtKB-UniRule"/>
</dbReference>
<dbReference type="GO" id="GO:0000287">
    <property type="term" value="F:magnesium ion binding"/>
    <property type="evidence" value="ECO:0007669"/>
    <property type="project" value="TreeGrafter"/>
</dbReference>
<dbReference type="GO" id="GO:0015940">
    <property type="term" value="P:pantothenate biosynthetic process"/>
    <property type="evidence" value="ECO:0007669"/>
    <property type="project" value="UniProtKB-UniRule"/>
</dbReference>
<dbReference type="CDD" id="cd06557">
    <property type="entry name" value="KPHMT-like"/>
    <property type="match status" value="1"/>
</dbReference>
<dbReference type="FunFam" id="3.20.20.60:FF:000017">
    <property type="entry name" value="3-methyl-2-oxobutanoate hydroxymethyltransferase"/>
    <property type="match status" value="1"/>
</dbReference>
<dbReference type="Gene3D" id="3.20.20.60">
    <property type="entry name" value="Phosphoenolpyruvate-binding domains"/>
    <property type="match status" value="1"/>
</dbReference>
<dbReference type="HAMAP" id="MF_00156">
    <property type="entry name" value="PanB"/>
    <property type="match status" value="1"/>
</dbReference>
<dbReference type="InterPro" id="IPR003700">
    <property type="entry name" value="Pantoate_hydroxy_MeTrfase"/>
</dbReference>
<dbReference type="InterPro" id="IPR015813">
    <property type="entry name" value="Pyrv/PenolPyrv_kinase-like_dom"/>
</dbReference>
<dbReference type="InterPro" id="IPR040442">
    <property type="entry name" value="Pyrv_kinase-like_dom_sf"/>
</dbReference>
<dbReference type="NCBIfam" id="TIGR00222">
    <property type="entry name" value="panB"/>
    <property type="match status" value="1"/>
</dbReference>
<dbReference type="NCBIfam" id="NF001452">
    <property type="entry name" value="PRK00311.1"/>
    <property type="match status" value="1"/>
</dbReference>
<dbReference type="PANTHER" id="PTHR20881">
    <property type="entry name" value="3-METHYL-2-OXOBUTANOATE HYDROXYMETHYLTRANSFERASE"/>
    <property type="match status" value="1"/>
</dbReference>
<dbReference type="PANTHER" id="PTHR20881:SF0">
    <property type="entry name" value="3-METHYL-2-OXOBUTANOATE HYDROXYMETHYLTRANSFERASE"/>
    <property type="match status" value="1"/>
</dbReference>
<dbReference type="Pfam" id="PF02548">
    <property type="entry name" value="Pantoate_transf"/>
    <property type="match status" value="1"/>
</dbReference>
<dbReference type="PIRSF" id="PIRSF000388">
    <property type="entry name" value="Pantoate_hydroxy_MeTrfase"/>
    <property type="match status" value="1"/>
</dbReference>
<dbReference type="SUPFAM" id="SSF51621">
    <property type="entry name" value="Phosphoenolpyruvate/pyruvate domain"/>
    <property type="match status" value="1"/>
</dbReference>
<evidence type="ECO:0000255" key="1">
    <source>
        <dbReference type="HAMAP-Rule" id="MF_00156"/>
    </source>
</evidence>